<gene>
    <name type="primary">mutM</name>
    <name type="synonym">fpg</name>
    <name type="synonym">ytaE</name>
    <name type="ordered locus">BSU29080</name>
</gene>
<proteinExistence type="inferred from homology"/>
<comment type="function">
    <text evidence="1">Involved in the GO system responsible for removing an oxidatively damaged form of guanine (7,8-dihydro-8-oxoguanine, 8-oxo-dGTP) from DNA and the nucleotide pool. 8-oxo-dGTP is inserted opposite dA and dC residues of template DNA with almost equal efficiency thus leading to A.T to G.C transversions (By similarity). Involved in base excision repair of DNA damaged by oxidation or by mutagenic agents. Acts as a DNA glycosylase that recognizes and removes damaged bases. Has a preference for oxidized purines, such as 8-oxo-dGTP. Has AP (apurinic/apyrimidinic) lyase activity and introduces nicks in the DNA strand. Cleaves the DNA backbone by beta-delta elimination to generate a single-strand break at the site of the removed base.</text>
</comment>
<comment type="catalytic activity">
    <reaction>
        <text>Hydrolysis of DNA containing ring-opened 7-methylguanine residues, releasing 2,6-diamino-4-hydroxy-5-(N-methyl)formamidopyrimidine.</text>
        <dbReference type="EC" id="3.2.2.23"/>
    </reaction>
</comment>
<comment type="catalytic activity">
    <reaction>
        <text>2'-deoxyribonucleotide-(2'-deoxyribose 5'-phosphate)-2'-deoxyribonucleotide-DNA = a 3'-end 2'-deoxyribonucleotide-(2,3-dehydro-2,3-deoxyribose 5'-phosphate)-DNA + a 5'-end 5'-phospho-2'-deoxyribonucleoside-DNA + H(+)</text>
        <dbReference type="Rhea" id="RHEA:66592"/>
        <dbReference type="Rhea" id="RHEA-COMP:13180"/>
        <dbReference type="Rhea" id="RHEA-COMP:16897"/>
        <dbReference type="Rhea" id="RHEA-COMP:17067"/>
        <dbReference type="ChEBI" id="CHEBI:15378"/>
        <dbReference type="ChEBI" id="CHEBI:136412"/>
        <dbReference type="ChEBI" id="CHEBI:157695"/>
        <dbReference type="ChEBI" id="CHEBI:167181"/>
        <dbReference type="EC" id="4.2.99.18"/>
    </reaction>
</comment>
<comment type="cofactor">
    <cofactor evidence="1">
        <name>Zn(2+)</name>
        <dbReference type="ChEBI" id="CHEBI:29105"/>
    </cofactor>
    <text evidence="1">Binds 1 zinc ion per subunit.</text>
</comment>
<comment type="subunit">
    <text evidence="1">Monomer.</text>
</comment>
<comment type="disruption phenotype">
    <text evidence="2 3">Cells lacking this gene have a 5-fold increased spontaneous mutation frequency. A double mutM/mutY mutant has a 1000-fold increased spontaneous mutation frequency (PubMed:12483591). Triple ytkD/mutM/mutY disrupted strains show increased mutation rates during both exponential and stationary phase (PubMed:19011023).</text>
</comment>
<comment type="similarity">
    <text evidence="4">Belongs to the FPG family.</text>
</comment>
<comment type="sequence caution" evidence="4">
    <conflict type="erroneous initiation">
        <sequence resource="EMBL-CDS" id="AAC00351"/>
    </conflict>
</comment>
<accession>O34403</accession>
<keyword id="KW-0227">DNA damage</keyword>
<keyword id="KW-0234">DNA repair</keyword>
<keyword id="KW-0238">DNA-binding</keyword>
<keyword id="KW-0326">Glycosidase</keyword>
<keyword id="KW-0378">Hydrolase</keyword>
<keyword id="KW-0456">Lyase</keyword>
<keyword id="KW-0479">Metal-binding</keyword>
<keyword id="KW-0511">Multifunctional enzyme</keyword>
<keyword id="KW-1185">Reference proteome</keyword>
<keyword id="KW-0862">Zinc</keyword>
<keyword id="KW-0863">Zinc-finger</keyword>
<dbReference type="EC" id="3.2.2.23"/>
<dbReference type="EC" id="4.2.99.18"/>
<dbReference type="EMBL" id="AF008220">
    <property type="protein sequence ID" value="AAC00351.1"/>
    <property type="status" value="ALT_INIT"/>
    <property type="molecule type" value="Genomic_DNA"/>
</dbReference>
<dbReference type="EMBL" id="AL009126">
    <property type="protein sequence ID" value="CAB14868.2"/>
    <property type="molecule type" value="Genomic_DNA"/>
</dbReference>
<dbReference type="PIR" id="B69663">
    <property type="entry name" value="B69663"/>
</dbReference>
<dbReference type="RefSeq" id="NP_390786.2">
    <property type="nucleotide sequence ID" value="NC_000964.3"/>
</dbReference>
<dbReference type="RefSeq" id="WP_003246122.1">
    <property type="nucleotide sequence ID" value="NZ_OZ025638.1"/>
</dbReference>
<dbReference type="SMR" id="O34403"/>
<dbReference type="FunCoup" id="O34403">
    <property type="interactions" value="414"/>
</dbReference>
<dbReference type="STRING" id="224308.BSU29080"/>
<dbReference type="PaxDb" id="224308-BSU29080"/>
<dbReference type="EnsemblBacteria" id="CAB14868">
    <property type="protein sequence ID" value="CAB14868"/>
    <property type="gene ID" value="BSU_29080"/>
</dbReference>
<dbReference type="GeneID" id="936741"/>
<dbReference type="KEGG" id="bsu:BSU29080"/>
<dbReference type="PATRIC" id="fig|224308.43.peg.3042"/>
<dbReference type="eggNOG" id="COG0266">
    <property type="taxonomic scope" value="Bacteria"/>
</dbReference>
<dbReference type="InParanoid" id="O34403"/>
<dbReference type="OrthoDB" id="9800855at2"/>
<dbReference type="PhylomeDB" id="O34403"/>
<dbReference type="BioCyc" id="BSUB:BSU29080-MONOMER"/>
<dbReference type="Proteomes" id="UP000001570">
    <property type="component" value="Chromosome"/>
</dbReference>
<dbReference type="GO" id="GO:0034039">
    <property type="term" value="F:8-oxo-7,8-dihydroguanine DNA N-glycosylase activity"/>
    <property type="evidence" value="ECO:0000318"/>
    <property type="project" value="GO_Central"/>
</dbReference>
<dbReference type="GO" id="GO:0140078">
    <property type="term" value="F:class I DNA-(apurinic or apyrimidinic site) endonuclease activity"/>
    <property type="evidence" value="ECO:0007669"/>
    <property type="project" value="UniProtKB-EC"/>
</dbReference>
<dbReference type="GO" id="GO:0003684">
    <property type="term" value="F:damaged DNA binding"/>
    <property type="evidence" value="ECO:0007669"/>
    <property type="project" value="InterPro"/>
</dbReference>
<dbReference type="GO" id="GO:0003906">
    <property type="term" value="F:DNA-(apurinic or apyrimidinic site) endonuclease activity"/>
    <property type="evidence" value="ECO:0000318"/>
    <property type="project" value="GO_Central"/>
</dbReference>
<dbReference type="GO" id="GO:0008270">
    <property type="term" value="F:zinc ion binding"/>
    <property type="evidence" value="ECO:0007669"/>
    <property type="project" value="UniProtKB-UniRule"/>
</dbReference>
<dbReference type="GO" id="GO:0006284">
    <property type="term" value="P:base-excision repair"/>
    <property type="evidence" value="ECO:0000318"/>
    <property type="project" value="GO_Central"/>
</dbReference>
<dbReference type="CDD" id="cd08966">
    <property type="entry name" value="EcFpg-like_N"/>
    <property type="match status" value="1"/>
</dbReference>
<dbReference type="FunFam" id="1.10.8.50:FF:000003">
    <property type="entry name" value="Formamidopyrimidine-DNA glycosylase"/>
    <property type="match status" value="1"/>
</dbReference>
<dbReference type="FunFam" id="3.20.190.10:FF:000001">
    <property type="entry name" value="Formamidopyrimidine-DNA glycosylase"/>
    <property type="match status" value="1"/>
</dbReference>
<dbReference type="Gene3D" id="1.10.8.50">
    <property type="match status" value="1"/>
</dbReference>
<dbReference type="Gene3D" id="3.20.190.10">
    <property type="entry name" value="MutM-like, N-terminal"/>
    <property type="match status" value="1"/>
</dbReference>
<dbReference type="HAMAP" id="MF_00103">
    <property type="entry name" value="Fapy_DNA_glycosyl"/>
    <property type="match status" value="1"/>
</dbReference>
<dbReference type="InterPro" id="IPR015886">
    <property type="entry name" value="DNA_glyclase/AP_lyase_DNA-bd"/>
</dbReference>
<dbReference type="InterPro" id="IPR015887">
    <property type="entry name" value="DNA_glyclase_Znf_dom_DNA_BS"/>
</dbReference>
<dbReference type="InterPro" id="IPR020629">
    <property type="entry name" value="Formamido-pyr_DNA_Glyclase"/>
</dbReference>
<dbReference type="InterPro" id="IPR012319">
    <property type="entry name" value="FPG_cat"/>
</dbReference>
<dbReference type="InterPro" id="IPR035937">
    <property type="entry name" value="MutM-like_N-ter"/>
</dbReference>
<dbReference type="InterPro" id="IPR010979">
    <property type="entry name" value="Ribosomal_uS13-like_H2TH"/>
</dbReference>
<dbReference type="InterPro" id="IPR000214">
    <property type="entry name" value="Znf_DNA_glyclase/AP_lyase"/>
</dbReference>
<dbReference type="InterPro" id="IPR010663">
    <property type="entry name" value="Znf_FPG/IleRS"/>
</dbReference>
<dbReference type="NCBIfam" id="TIGR00577">
    <property type="entry name" value="fpg"/>
    <property type="match status" value="1"/>
</dbReference>
<dbReference type="NCBIfam" id="NF002211">
    <property type="entry name" value="PRK01103.1"/>
    <property type="match status" value="1"/>
</dbReference>
<dbReference type="PANTHER" id="PTHR22993">
    <property type="entry name" value="FORMAMIDOPYRIMIDINE-DNA GLYCOSYLASE"/>
    <property type="match status" value="1"/>
</dbReference>
<dbReference type="PANTHER" id="PTHR22993:SF9">
    <property type="entry name" value="FORMAMIDOPYRIMIDINE-DNA GLYCOSYLASE"/>
    <property type="match status" value="1"/>
</dbReference>
<dbReference type="Pfam" id="PF01149">
    <property type="entry name" value="Fapy_DNA_glyco"/>
    <property type="match status" value="1"/>
</dbReference>
<dbReference type="Pfam" id="PF06831">
    <property type="entry name" value="H2TH"/>
    <property type="match status" value="1"/>
</dbReference>
<dbReference type="Pfam" id="PF06827">
    <property type="entry name" value="zf-FPG_IleRS"/>
    <property type="match status" value="1"/>
</dbReference>
<dbReference type="SMART" id="SM00898">
    <property type="entry name" value="Fapy_DNA_glyco"/>
    <property type="match status" value="1"/>
</dbReference>
<dbReference type="SMART" id="SM01232">
    <property type="entry name" value="H2TH"/>
    <property type="match status" value="1"/>
</dbReference>
<dbReference type="SUPFAM" id="SSF57716">
    <property type="entry name" value="Glucocorticoid receptor-like (DNA-binding domain)"/>
    <property type="match status" value="1"/>
</dbReference>
<dbReference type="SUPFAM" id="SSF81624">
    <property type="entry name" value="N-terminal domain of MutM-like DNA repair proteins"/>
    <property type="match status" value="1"/>
</dbReference>
<dbReference type="SUPFAM" id="SSF46946">
    <property type="entry name" value="S13-like H2TH domain"/>
    <property type="match status" value="1"/>
</dbReference>
<dbReference type="PROSITE" id="PS51068">
    <property type="entry name" value="FPG_CAT"/>
    <property type="match status" value="1"/>
</dbReference>
<dbReference type="PROSITE" id="PS01242">
    <property type="entry name" value="ZF_FPG_1"/>
    <property type="match status" value="1"/>
</dbReference>
<dbReference type="PROSITE" id="PS51066">
    <property type="entry name" value="ZF_FPG_2"/>
    <property type="match status" value="1"/>
</dbReference>
<evidence type="ECO:0000250" key="1"/>
<evidence type="ECO:0000269" key="2">
    <source>
    </source>
</evidence>
<evidence type="ECO:0000269" key="3">
    <source>
    </source>
</evidence>
<evidence type="ECO:0000305" key="4"/>
<sequence>MPELPEVETVRRTLTGLVKGKTIKSVEIRWPNIIKRPAEPEEFARKLAGETIQSIGRRGKFLLFHLDHYVMVSHLRMEGKYGLHQAEEPDDKHVHVIFTMTDGTQLRYRDVRKFGTMHLFKPGEEAGELPLSQLGPEPDAEEFTSAYLKDRLAKTNRAVKTALLDQKTVVGLGNIYVDEALFRAGVHPETKANQLSDKTIKTLHAEIKNTLQEAIDAGGSTVRSYINSQGEIGMFQLQHFVYGKKDEPCKNCGTMISKIVVGGRGTHFCAKCQTKK</sequence>
<name>FPG_BACSU</name>
<reference key="1">
    <citation type="journal article" date="1997" name="Microbiology">
        <title>Sequencing and functional annotation of the Bacillus subtilis genes in the 200 kb rrnB-dnaB region.</title>
        <authorList>
            <person name="Lapidus A."/>
            <person name="Galleron N."/>
            <person name="Sorokin A."/>
            <person name="Ehrlich S.D."/>
        </authorList>
    </citation>
    <scope>NUCLEOTIDE SEQUENCE [GENOMIC DNA]</scope>
    <source>
        <strain>168</strain>
    </source>
</reference>
<reference key="2">
    <citation type="journal article" date="1997" name="Nature">
        <title>The complete genome sequence of the Gram-positive bacterium Bacillus subtilis.</title>
        <authorList>
            <person name="Kunst F."/>
            <person name="Ogasawara N."/>
            <person name="Moszer I."/>
            <person name="Albertini A.M."/>
            <person name="Alloni G."/>
            <person name="Azevedo V."/>
            <person name="Bertero M.G."/>
            <person name="Bessieres P."/>
            <person name="Bolotin A."/>
            <person name="Borchert S."/>
            <person name="Borriss R."/>
            <person name="Boursier L."/>
            <person name="Brans A."/>
            <person name="Braun M."/>
            <person name="Brignell S.C."/>
            <person name="Bron S."/>
            <person name="Brouillet S."/>
            <person name="Bruschi C.V."/>
            <person name="Caldwell B."/>
            <person name="Capuano V."/>
            <person name="Carter N.M."/>
            <person name="Choi S.-K."/>
            <person name="Codani J.-J."/>
            <person name="Connerton I.F."/>
            <person name="Cummings N.J."/>
            <person name="Daniel R.A."/>
            <person name="Denizot F."/>
            <person name="Devine K.M."/>
            <person name="Duesterhoeft A."/>
            <person name="Ehrlich S.D."/>
            <person name="Emmerson P.T."/>
            <person name="Entian K.-D."/>
            <person name="Errington J."/>
            <person name="Fabret C."/>
            <person name="Ferrari E."/>
            <person name="Foulger D."/>
            <person name="Fritz C."/>
            <person name="Fujita M."/>
            <person name="Fujita Y."/>
            <person name="Fuma S."/>
            <person name="Galizzi A."/>
            <person name="Galleron N."/>
            <person name="Ghim S.-Y."/>
            <person name="Glaser P."/>
            <person name="Goffeau A."/>
            <person name="Golightly E.J."/>
            <person name="Grandi G."/>
            <person name="Guiseppi G."/>
            <person name="Guy B.J."/>
            <person name="Haga K."/>
            <person name="Haiech J."/>
            <person name="Harwood C.R."/>
            <person name="Henaut A."/>
            <person name="Hilbert H."/>
            <person name="Holsappel S."/>
            <person name="Hosono S."/>
            <person name="Hullo M.-F."/>
            <person name="Itaya M."/>
            <person name="Jones L.-M."/>
            <person name="Joris B."/>
            <person name="Karamata D."/>
            <person name="Kasahara Y."/>
            <person name="Klaerr-Blanchard M."/>
            <person name="Klein C."/>
            <person name="Kobayashi Y."/>
            <person name="Koetter P."/>
            <person name="Koningstein G."/>
            <person name="Krogh S."/>
            <person name="Kumano M."/>
            <person name="Kurita K."/>
            <person name="Lapidus A."/>
            <person name="Lardinois S."/>
            <person name="Lauber J."/>
            <person name="Lazarevic V."/>
            <person name="Lee S.-M."/>
            <person name="Levine A."/>
            <person name="Liu H."/>
            <person name="Masuda S."/>
            <person name="Mauel C."/>
            <person name="Medigue C."/>
            <person name="Medina N."/>
            <person name="Mellado R.P."/>
            <person name="Mizuno M."/>
            <person name="Moestl D."/>
            <person name="Nakai S."/>
            <person name="Noback M."/>
            <person name="Noone D."/>
            <person name="O'Reilly M."/>
            <person name="Ogawa K."/>
            <person name="Ogiwara A."/>
            <person name="Oudega B."/>
            <person name="Park S.-H."/>
            <person name="Parro V."/>
            <person name="Pohl T.M."/>
            <person name="Portetelle D."/>
            <person name="Porwollik S."/>
            <person name="Prescott A.M."/>
            <person name="Presecan E."/>
            <person name="Pujic P."/>
            <person name="Purnelle B."/>
            <person name="Rapoport G."/>
            <person name="Rey M."/>
            <person name="Reynolds S."/>
            <person name="Rieger M."/>
            <person name="Rivolta C."/>
            <person name="Rocha E."/>
            <person name="Roche B."/>
            <person name="Rose M."/>
            <person name="Sadaie Y."/>
            <person name="Sato T."/>
            <person name="Scanlan E."/>
            <person name="Schleich S."/>
            <person name="Schroeter R."/>
            <person name="Scoffone F."/>
            <person name="Sekiguchi J."/>
            <person name="Sekowska A."/>
            <person name="Seror S.J."/>
            <person name="Serror P."/>
            <person name="Shin B.-S."/>
            <person name="Soldo B."/>
            <person name="Sorokin A."/>
            <person name="Tacconi E."/>
            <person name="Takagi T."/>
            <person name="Takahashi H."/>
            <person name="Takemaru K."/>
            <person name="Takeuchi M."/>
            <person name="Tamakoshi A."/>
            <person name="Tanaka T."/>
            <person name="Terpstra P."/>
            <person name="Tognoni A."/>
            <person name="Tosato V."/>
            <person name="Uchiyama S."/>
            <person name="Vandenbol M."/>
            <person name="Vannier F."/>
            <person name="Vassarotti A."/>
            <person name="Viari A."/>
            <person name="Wambutt R."/>
            <person name="Wedler E."/>
            <person name="Wedler H."/>
            <person name="Weitzenegger T."/>
            <person name="Winters P."/>
            <person name="Wipat A."/>
            <person name="Yamamoto H."/>
            <person name="Yamane K."/>
            <person name="Yasumoto K."/>
            <person name="Yata K."/>
            <person name="Yoshida K."/>
            <person name="Yoshikawa H.-F."/>
            <person name="Zumstein E."/>
            <person name="Yoshikawa H."/>
            <person name="Danchin A."/>
        </authorList>
    </citation>
    <scope>NUCLEOTIDE SEQUENCE [LARGE SCALE GENOMIC DNA]</scope>
    <source>
        <strain>168</strain>
    </source>
</reference>
<reference key="3">
    <citation type="journal article" date="2009" name="Microbiology">
        <title>From a consortium sequence to a unified sequence: the Bacillus subtilis 168 reference genome a decade later.</title>
        <authorList>
            <person name="Barbe V."/>
            <person name="Cruveiller S."/>
            <person name="Kunst F."/>
            <person name="Lenoble P."/>
            <person name="Meurice G."/>
            <person name="Sekowska A."/>
            <person name="Vallenet D."/>
            <person name="Wang T."/>
            <person name="Moszer I."/>
            <person name="Medigue C."/>
            <person name="Danchin A."/>
        </authorList>
    </citation>
    <scope>SEQUENCE REVISION TO N-TERMINUS</scope>
</reference>
<reference key="4">
    <citation type="journal article" date="2000" name="J. Gen. Appl. Microbiol.">
        <title>Genetic analysis of Bacillus subtilis mutator genes.</title>
        <authorList>
            <person name="Sasaki M."/>
            <person name="Yonemura Y."/>
            <person name="Kurusu Y."/>
        </authorList>
    </citation>
    <scope>DISRUPTION PHENOTYPE</scope>
    <source>
        <strain>168</strain>
    </source>
</reference>
<reference key="5">
    <citation type="journal article" date="2009" name="J. Bacteriol.">
        <title>Defects in the error prevention oxidized guanine system potentiate stationary-phase mutagenesis in Bacillus subtilis.</title>
        <authorList>
            <person name="Vidales L.E."/>
            <person name="Cardenas L.C."/>
            <person name="Robleto E."/>
            <person name="Yasbin R.E."/>
            <person name="Pedraza-Reyes M."/>
        </authorList>
    </citation>
    <scope>DISRUPTION PHENOTYPE IN STATIONARY PHASE CELLS</scope>
    <source>
        <strain>168 / YB955</strain>
    </source>
</reference>
<organism>
    <name type="scientific">Bacillus subtilis (strain 168)</name>
    <dbReference type="NCBI Taxonomy" id="224308"/>
    <lineage>
        <taxon>Bacteria</taxon>
        <taxon>Bacillati</taxon>
        <taxon>Bacillota</taxon>
        <taxon>Bacilli</taxon>
        <taxon>Bacillales</taxon>
        <taxon>Bacillaceae</taxon>
        <taxon>Bacillus</taxon>
    </lineage>
</organism>
<feature type="initiator methionine" description="Removed" evidence="1">
    <location>
        <position position="1"/>
    </location>
</feature>
<feature type="chain" id="PRO_0000170811" description="Formamidopyrimidine-DNA glycosylase">
    <location>
        <begin position="2"/>
        <end position="276"/>
    </location>
</feature>
<feature type="zinc finger region" description="FPG-type">
    <location>
        <begin position="240"/>
        <end position="274"/>
    </location>
</feature>
<feature type="active site" description="Schiff-base intermediate with DNA" evidence="1">
    <location>
        <position position="2"/>
    </location>
</feature>
<feature type="active site" description="Proton donor" evidence="1">
    <location>
        <position position="3"/>
    </location>
</feature>
<feature type="active site" description="Proton donor; for beta-elimination activity" evidence="1">
    <location>
        <position position="60"/>
    </location>
</feature>
<feature type="active site" description="Proton donor; for delta-elimination activity" evidence="1">
    <location>
        <position position="264"/>
    </location>
</feature>
<feature type="binding site" evidence="1">
    <location>
        <position position="93"/>
    </location>
    <ligand>
        <name>DNA</name>
        <dbReference type="ChEBI" id="CHEBI:16991"/>
    </ligand>
</feature>
<feature type="binding site" evidence="1">
    <location>
        <position position="112"/>
    </location>
    <ligand>
        <name>DNA</name>
        <dbReference type="ChEBI" id="CHEBI:16991"/>
    </ligand>
</feature>
<protein>
    <recommendedName>
        <fullName>Formamidopyrimidine-DNA glycosylase</fullName>
        <shortName>Fapy-DNA glycosylase</shortName>
        <ecNumber>3.2.2.23</ecNumber>
    </recommendedName>
    <alternativeName>
        <fullName>DNA-(apurinic or apyrimidinic site) lyase MutM</fullName>
        <shortName>AP lyase MutM</shortName>
        <ecNumber>4.2.99.18</ecNumber>
    </alternativeName>
</protein>